<name>KTHY2_SACS2</name>
<evidence type="ECO:0000255" key="1"/>
<evidence type="ECO:0000305" key="2"/>
<dbReference type="EC" id="2.7.4.9"/>
<dbReference type="EMBL" id="AE006641">
    <property type="protein sequence ID" value="AAK41441.1"/>
    <property type="molecule type" value="Genomic_DNA"/>
</dbReference>
<dbReference type="PIR" id="B90273">
    <property type="entry name" value="B90273"/>
</dbReference>
<dbReference type="SMR" id="P58157"/>
<dbReference type="FunCoup" id="P58157">
    <property type="interactions" value="194"/>
</dbReference>
<dbReference type="STRING" id="273057.SSO1192"/>
<dbReference type="PaxDb" id="273057-SSO1192"/>
<dbReference type="EnsemblBacteria" id="AAK41441">
    <property type="protein sequence ID" value="AAK41441"/>
    <property type="gene ID" value="SSO1192"/>
</dbReference>
<dbReference type="KEGG" id="sso:SSO1192"/>
<dbReference type="PATRIC" id="fig|273057.12.peg.1192"/>
<dbReference type="eggNOG" id="arCOG01891">
    <property type="taxonomic scope" value="Archaea"/>
</dbReference>
<dbReference type="HOGENOM" id="CLU_049131_1_3_2"/>
<dbReference type="InParanoid" id="P58157"/>
<dbReference type="PhylomeDB" id="P58157"/>
<dbReference type="Proteomes" id="UP000001974">
    <property type="component" value="Chromosome"/>
</dbReference>
<dbReference type="GO" id="GO:0005737">
    <property type="term" value="C:cytoplasm"/>
    <property type="evidence" value="ECO:0000318"/>
    <property type="project" value="GO_Central"/>
</dbReference>
<dbReference type="GO" id="GO:0005524">
    <property type="term" value="F:ATP binding"/>
    <property type="evidence" value="ECO:0007669"/>
    <property type="project" value="UniProtKB-UniRule"/>
</dbReference>
<dbReference type="GO" id="GO:0004798">
    <property type="term" value="F:dTMP kinase activity"/>
    <property type="evidence" value="ECO:0000318"/>
    <property type="project" value="GO_Central"/>
</dbReference>
<dbReference type="GO" id="GO:0006233">
    <property type="term" value="P:dTDP biosynthetic process"/>
    <property type="evidence" value="ECO:0000318"/>
    <property type="project" value="GO_Central"/>
</dbReference>
<dbReference type="GO" id="GO:0006235">
    <property type="term" value="P:dTTP biosynthetic process"/>
    <property type="evidence" value="ECO:0000318"/>
    <property type="project" value="GO_Central"/>
</dbReference>
<dbReference type="GO" id="GO:0006227">
    <property type="term" value="P:dUDP biosynthetic process"/>
    <property type="evidence" value="ECO:0000318"/>
    <property type="project" value="GO_Central"/>
</dbReference>
<dbReference type="CDD" id="cd01672">
    <property type="entry name" value="TMPK"/>
    <property type="match status" value="1"/>
</dbReference>
<dbReference type="FunFam" id="3.40.50.300:FF:004375">
    <property type="entry name" value="Probable thymidylate kinase"/>
    <property type="match status" value="1"/>
</dbReference>
<dbReference type="Gene3D" id="3.40.50.300">
    <property type="entry name" value="P-loop containing nucleotide triphosphate hydrolases"/>
    <property type="match status" value="1"/>
</dbReference>
<dbReference type="HAMAP" id="MF_00165">
    <property type="entry name" value="Thymidylate_kinase"/>
    <property type="match status" value="1"/>
</dbReference>
<dbReference type="InterPro" id="IPR027417">
    <property type="entry name" value="P-loop_NTPase"/>
</dbReference>
<dbReference type="InterPro" id="IPR039430">
    <property type="entry name" value="Thymidylate_kin-like_dom"/>
</dbReference>
<dbReference type="InterPro" id="IPR018094">
    <property type="entry name" value="Thymidylate_kinase"/>
</dbReference>
<dbReference type="NCBIfam" id="TIGR00041">
    <property type="entry name" value="DTMP_kinase"/>
    <property type="match status" value="1"/>
</dbReference>
<dbReference type="PANTHER" id="PTHR10344">
    <property type="entry name" value="THYMIDYLATE KINASE"/>
    <property type="match status" value="1"/>
</dbReference>
<dbReference type="PANTHER" id="PTHR10344:SF1">
    <property type="entry name" value="THYMIDYLATE KINASE"/>
    <property type="match status" value="1"/>
</dbReference>
<dbReference type="Pfam" id="PF02223">
    <property type="entry name" value="Thymidylate_kin"/>
    <property type="match status" value="1"/>
</dbReference>
<dbReference type="SUPFAM" id="SSF52540">
    <property type="entry name" value="P-loop containing nucleoside triphosphate hydrolases"/>
    <property type="match status" value="1"/>
</dbReference>
<protein>
    <recommendedName>
        <fullName>Probable thymidylate kinase 2</fullName>
        <ecNumber>2.7.4.9</ecNumber>
    </recommendedName>
    <alternativeName>
        <fullName>dTMP kinase 2</fullName>
    </alternativeName>
</protein>
<organism>
    <name type="scientific">Saccharolobus solfataricus (strain ATCC 35092 / DSM 1617 / JCM 11322 / P2)</name>
    <name type="common">Sulfolobus solfataricus</name>
    <dbReference type="NCBI Taxonomy" id="273057"/>
    <lineage>
        <taxon>Archaea</taxon>
        <taxon>Thermoproteota</taxon>
        <taxon>Thermoprotei</taxon>
        <taxon>Sulfolobales</taxon>
        <taxon>Sulfolobaceae</taxon>
        <taxon>Saccharolobus</taxon>
    </lineage>
</organism>
<gene>
    <name type="primary">tmk2</name>
    <name type="ordered locus">SSO1192</name>
    <name type="ORF">C50_002</name>
</gene>
<proteinExistence type="inferred from homology"/>
<keyword id="KW-0067">ATP-binding</keyword>
<keyword id="KW-0418">Kinase</keyword>
<keyword id="KW-0545">Nucleotide biosynthesis</keyword>
<keyword id="KW-0547">Nucleotide-binding</keyword>
<keyword id="KW-1185">Reference proteome</keyword>
<keyword id="KW-0808">Transferase</keyword>
<reference key="1">
    <citation type="journal article" date="2001" name="Proc. Natl. Acad. Sci. U.S.A.">
        <title>The complete genome of the crenarchaeon Sulfolobus solfataricus P2.</title>
        <authorList>
            <person name="She Q."/>
            <person name="Singh R.K."/>
            <person name="Confalonieri F."/>
            <person name="Zivanovic Y."/>
            <person name="Allard G."/>
            <person name="Awayez M.J."/>
            <person name="Chan-Weiher C.C.-Y."/>
            <person name="Clausen I.G."/>
            <person name="Curtis B.A."/>
            <person name="De Moors A."/>
            <person name="Erauso G."/>
            <person name="Fletcher C."/>
            <person name="Gordon P.M.K."/>
            <person name="Heikamp-de Jong I."/>
            <person name="Jeffries A.C."/>
            <person name="Kozera C.J."/>
            <person name="Medina N."/>
            <person name="Peng X."/>
            <person name="Thi-Ngoc H.P."/>
            <person name="Redder P."/>
            <person name="Schenk M.E."/>
            <person name="Theriault C."/>
            <person name="Tolstrup N."/>
            <person name="Charlebois R.L."/>
            <person name="Doolittle W.F."/>
            <person name="Duguet M."/>
            <person name="Gaasterland T."/>
            <person name="Garrett R.A."/>
            <person name="Ragan M.A."/>
            <person name="Sensen C.W."/>
            <person name="Van der Oost J."/>
        </authorList>
    </citation>
    <scope>NUCLEOTIDE SEQUENCE [LARGE SCALE GENOMIC DNA]</scope>
    <source>
        <strain>ATCC 35092 / DSM 1617 / JCM 11322 / P2</strain>
    </source>
</reference>
<feature type="chain" id="PRO_0000155399" description="Probable thymidylate kinase 2">
    <location>
        <begin position="1"/>
        <end position="213"/>
    </location>
</feature>
<feature type="binding site" evidence="1">
    <location>
        <begin position="10"/>
        <end position="17"/>
    </location>
    <ligand>
        <name>ATP</name>
        <dbReference type="ChEBI" id="CHEBI:30616"/>
    </ligand>
</feature>
<comment type="catalytic activity">
    <reaction>
        <text>dTMP + ATP = dTDP + ADP</text>
        <dbReference type="Rhea" id="RHEA:13517"/>
        <dbReference type="ChEBI" id="CHEBI:30616"/>
        <dbReference type="ChEBI" id="CHEBI:58369"/>
        <dbReference type="ChEBI" id="CHEBI:63528"/>
        <dbReference type="ChEBI" id="CHEBI:456216"/>
        <dbReference type="EC" id="2.7.4.9"/>
    </reaction>
</comment>
<comment type="similarity">
    <text evidence="2">Belongs to the thymidylate kinase family.</text>
</comment>
<accession>P58157</accession>
<sequence length="213" mass="25001">MRGLLIAFEGIDGSGKSSQAVLLKDWIEMRRDVYLTEWNSSEWIHDIIKEAKKKNMLTSITFSLIHATDFSDRYERYILPMLKSGFVVICDRYVYTAYARDVVRNVDFDWVKRLYSFAIKPNFTFYIRVTPEIALERIRKAKRKIKPQEAGIDILGEIPLEEGFLKYQSRIVEIYDKIAKEESNFITIDGNRPLKDVQIDIRKILGEYIDNSL</sequence>